<gene>
    <name evidence="1" type="primary">glyA</name>
    <name type="ordered locus">MHJ_0218</name>
</gene>
<accession>Q4AAB2</accession>
<protein>
    <recommendedName>
        <fullName evidence="1">Probable serine hydroxymethyltransferase</fullName>
        <shortName evidence="1">SHMT</shortName>
        <shortName evidence="1">Serine methylase</shortName>
        <ecNumber evidence="1">2.1.2.1</ecNumber>
    </recommendedName>
</protein>
<comment type="function">
    <text evidence="1">Catalyzes the reversible interconversion of serine and glycine with tetrahydrofolate (THF) serving as the one-carbon carrier. This reaction serves as the major source of one-carbon groups required for the biosynthesis of purines, thymidylate, methionine, and other important biomolecules.</text>
</comment>
<comment type="catalytic activity">
    <reaction evidence="1">
        <text>(6R)-5,10-methylene-5,6,7,8-tetrahydrofolate + glycine + H2O = (6S)-5,6,7,8-tetrahydrofolate + L-serine</text>
        <dbReference type="Rhea" id="RHEA:15481"/>
        <dbReference type="ChEBI" id="CHEBI:15377"/>
        <dbReference type="ChEBI" id="CHEBI:15636"/>
        <dbReference type="ChEBI" id="CHEBI:33384"/>
        <dbReference type="ChEBI" id="CHEBI:57305"/>
        <dbReference type="ChEBI" id="CHEBI:57453"/>
        <dbReference type="EC" id="2.1.2.1"/>
    </reaction>
</comment>
<comment type="cofactor">
    <cofactor evidence="1">
        <name>pyridoxal 5'-phosphate</name>
        <dbReference type="ChEBI" id="CHEBI:597326"/>
    </cofactor>
</comment>
<comment type="pathway">
    <text evidence="1">One-carbon metabolism; tetrahydrofolate interconversion.</text>
</comment>
<comment type="subunit">
    <text evidence="1">Homodimer.</text>
</comment>
<comment type="subcellular location">
    <subcellularLocation>
        <location evidence="1">Cytoplasm</location>
    </subcellularLocation>
</comment>
<comment type="similarity">
    <text evidence="1">Belongs to the SHMT family.</text>
</comment>
<proteinExistence type="inferred from homology"/>
<keyword id="KW-0963">Cytoplasm</keyword>
<keyword id="KW-0554">One-carbon metabolism</keyword>
<keyword id="KW-0663">Pyridoxal phosphate</keyword>
<keyword id="KW-0808">Transferase</keyword>
<evidence type="ECO:0000255" key="1">
    <source>
        <dbReference type="HAMAP-Rule" id="MF_00051"/>
    </source>
</evidence>
<organism>
    <name type="scientific">Mesomycoplasma hyopneumoniae (strain J / ATCC 25934 / NCTC 10110)</name>
    <name type="common">Mycoplasma hyopneumoniae</name>
    <dbReference type="NCBI Taxonomy" id="262719"/>
    <lineage>
        <taxon>Bacteria</taxon>
        <taxon>Bacillati</taxon>
        <taxon>Mycoplasmatota</taxon>
        <taxon>Mycoplasmoidales</taxon>
        <taxon>Metamycoplasmataceae</taxon>
        <taxon>Mesomycoplasma</taxon>
    </lineage>
</organism>
<sequence length="418" mass="46491">MYKKIKLRDQQISELINLESKRQNSQIELIASENYASEDVILANGTSPSNKYGEGYPGKRYYGGCTFIDQIEKIAIERVKKLFKIEYANVQPYSGSSANAAVFAALLKPGDKILGLDLNAGGHLSHGYKINFSGMFYSGISYFLDENELLDYDAIEKIALKTKPNLIICGYSAYSRKIDFARFRQIADKVNAFLLADIAHIAGLIAAGQHPSPVGYAHIITSTTQKTLRGPRGGLILTNSKEIAAKIDKVVFPGIQGGPFFHTIAAKAVAFKEALEPWFKEYCAQIVKNASHFASEFIKKGIRIVSQGTENHLFTIDVLSSYNLNGKQAQILLESVNIITNKNTIPNDTLSPFVTSGLRLGTPAMTSRGFKEQEFSQMAEIIDFVLRKKELNALEIKEIKKKVKILTKNFPIKKSYWP</sequence>
<reference key="1">
    <citation type="journal article" date="2005" name="J. Bacteriol.">
        <title>Swine and poultry pathogens: the complete genome sequences of two strains of Mycoplasma hyopneumoniae and a strain of Mycoplasma synoviae.</title>
        <authorList>
            <person name="Vasconcelos A.T.R."/>
            <person name="Ferreira H.B."/>
            <person name="Bizarro C.V."/>
            <person name="Bonatto S.L."/>
            <person name="Carvalho M.O."/>
            <person name="Pinto P.M."/>
            <person name="Almeida D.F."/>
            <person name="Almeida L.G.P."/>
            <person name="Almeida R."/>
            <person name="Alves-Junior L."/>
            <person name="Assuncao E.N."/>
            <person name="Azevedo V.A.C."/>
            <person name="Bogo M.R."/>
            <person name="Brigido M.M."/>
            <person name="Brocchi M."/>
            <person name="Burity H.A."/>
            <person name="Camargo A.A."/>
            <person name="Camargo S.S."/>
            <person name="Carepo M.S."/>
            <person name="Carraro D.M."/>
            <person name="de Mattos Cascardo J.C."/>
            <person name="Castro L.A."/>
            <person name="Cavalcanti G."/>
            <person name="Chemale G."/>
            <person name="Collevatti R.G."/>
            <person name="Cunha C.W."/>
            <person name="Dallagiovanna B."/>
            <person name="Dambros B.P."/>
            <person name="Dellagostin O.A."/>
            <person name="Falcao C."/>
            <person name="Fantinatti-Garboggini F."/>
            <person name="Felipe M.S.S."/>
            <person name="Fiorentin L."/>
            <person name="Franco G.R."/>
            <person name="Freitas N.S.A."/>
            <person name="Frias D."/>
            <person name="Grangeiro T.B."/>
            <person name="Grisard E.C."/>
            <person name="Guimaraes C.T."/>
            <person name="Hungria M."/>
            <person name="Jardim S.N."/>
            <person name="Krieger M.A."/>
            <person name="Laurino J.P."/>
            <person name="Lima L.F.A."/>
            <person name="Lopes M.I."/>
            <person name="Loreto E.L.S."/>
            <person name="Madeira H.M.F."/>
            <person name="Manfio G.P."/>
            <person name="Maranhao A.Q."/>
            <person name="Martinkovics C.T."/>
            <person name="Medeiros S.R.B."/>
            <person name="Moreira M.A.M."/>
            <person name="Neiva M."/>
            <person name="Ramalho-Neto C.E."/>
            <person name="Nicolas M.F."/>
            <person name="Oliveira S.C."/>
            <person name="Paixao R.F.C."/>
            <person name="Pedrosa F.O."/>
            <person name="Pena S.D.J."/>
            <person name="Pereira M."/>
            <person name="Pereira-Ferrari L."/>
            <person name="Piffer I."/>
            <person name="Pinto L.S."/>
            <person name="Potrich D.P."/>
            <person name="Salim A.C.M."/>
            <person name="Santos F.R."/>
            <person name="Schmitt R."/>
            <person name="Schneider M.P.C."/>
            <person name="Schrank A."/>
            <person name="Schrank I.S."/>
            <person name="Schuck A.F."/>
            <person name="Seuanez H.N."/>
            <person name="Silva D.W."/>
            <person name="Silva R."/>
            <person name="Silva S.C."/>
            <person name="Soares C.M.A."/>
            <person name="Souza K.R.L."/>
            <person name="Souza R.C."/>
            <person name="Staats C.C."/>
            <person name="Steffens M.B.R."/>
            <person name="Teixeira S.M.R."/>
            <person name="Urmenyi T.P."/>
            <person name="Vainstein M.H."/>
            <person name="Zuccherato L.W."/>
            <person name="Simpson A.J.G."/>
            <person name="Zaha A."/>
        </authorList>
    </citation>
    <scope>NUCLEOTIDE SEQUENCE [LARGE SCALE GENOMIC DNA]</scope>
    <source>
        <strain>J / ATCC 25934 / NCTC 10110</strain>
    </source>
</reference>
<dbReference type="EC" id="2.1.2.1" evidence="1"/>
<dbReference type="EMBL" id="AE017243">
    <property type="protein sequence ID" value="AAZ44309.1"/>
    <property type="molecule type" value="Genomic_DNA"/>
</dbReference>
<dbReference type="RefSeq" id="WP_011284001.1">
    <property type="nucleotide sequence ID" value="NC_007295.1"/>
</dbReference>
<dbReference type="SMR" id="Q4AAB2"/>
<dbReference type="GeneID" id="41334523"/>
<dbReference type="KEGG" id="mhj:MHJ_0218"/>
<dbReference type="eggNOG" id="COG0112">
    <property type="taxonomic scope" value="Bacteria"/>
</dbReference>
<dbReference type="HOGENOM" id="CLU_022477_2_1_14"/>
<dbReference type="OrthoDB" id="9803846at2"/>
<dbReference type="UniPathway" id="UPA00193"/>
<dbReference type="Proteomes" id="UP000000548">
    <property type="component" value="Chromosome"/>
</dbReference>
<dbReference type="GO" id="GO:0005829">
    <property type="term" value="C:cytosol"/>
    <property type="evidence" value="ECO:0007669"/>
    <property type="project" value="TreeGrafter"/>
</dbReference>
<dbReference type="GO" id="GO:0004372">
    <property type="term" value="F:glycine hydroxymethyltransferase activity"/>
    <property type="evidence" value="ECO:0007669"/>
    <property type="project" value="UniProtKB-EC"/>
</dbReference>
<dbReference type="GO" id="GO:0030170">
    <property type="term" value="F:pyridoxal phosphate binding"/>
    <property type="evidence" value="ECO:0007669"/>
    <property type="project" value="UniProtKB-UniRule"/>
</dbReference>
<dbReference type="GO" id="GO:0019264">
    <property type="term" value="P:glycine biosynthetic process from serine"/>
    <property type="evidence" value="ECO:0007669"/>
    <property type="project" value="InterPro"/>
</dbReference>
<dbReference type="GO" id="GO:0035999">
    <property type="term" value="P:tetrahydrofolate interconversion"/>
    <property type="evidence" value="ECO:0007669"/>
    <property type="project" value="UniProtKB-UniRule"/>
</dbReference>
<dbReference type="CDD" id="cd00378">
    <property type="entry name" value="SHMT"/>
    <property type="match status" value="1"/>
</dbReference>
<dbReference type="FunFam" id="3.40.640.10:FF:000001">
    <property type="entry name" value="Serine hydroxymethyltransferase"/>
    <property type="match status" value="1"/>
</dbReference>
<dbReference type="Gene3D" id="3.90.1150.10">
    <property type="entry name" value="Aspartate Aminotransferase, domain 1"/>
    <property type="match status" value="1"/>
</dbReference>
<dbReference type="Gene3D" id="3.40.640.10">
    <property type="entry name" value="Type I PLP-dependent aspartate aminotransferase-like (Major domain)"/>
    <property type="match status" value="1"/>
</dbReference>
<dbReference type="HAMAP" id="MF_00051">
    <property type="entry name" value="SHMT"/>
    <property type="match status" value="1"/>
</dbReference>
<dbReference type="InterPro" id="IPR015424">
    <property type="entry name" value="PyrdxlP-dep_Trfase"/>
</dbReference>
<dbReference type="InterPro" id="IPR015421">
    <property type="entry name" value="PyrdxlP-dep_Trfase_major"/>
</dbReference>
<dbReference type="InterPro" id="IPR015422">
    <property type="entry name" value="PyrdxlP-dep_Trfase_small"/>
</dbReference>
<dbReference type="InterPro" id="IPR001085">
    <property type="entry name" value="Ser_HO-MeTrfase"/>
</dbReference>
<dbReference type="InterPro" id="IPR049943">
    <property type="entry name" value="Ser_HO-MeTrfase-like"/>
</dbReference>
<dbReference type="InterPro" id="IPR019798">
    <property type="entry name" value="Ser_HO-MeTrfase_PLP_BS"/>
</dbReference>
<dbReference type="InterPro" id="IPR039429">
    <property type="entry name" value="SHMT-like_dom"/>
</dbReference>
<dbReference type="NCBIfam" id="NF000586">
    <property type="entry name" value="PRK00011.1"/>
    <property type="match status" value="1"/>
</dbReference>
<dbReference type="PANTHER" id="PTHR11680">
    <property type="entry name" value="SERINE HYDROXYMETHYLTRANSFERASE"/>
    <property type="match status" value="1"/>
</dbReference>
<dbReference type="PANTHER" id="PTHR11680:SF35">
    <property type="entry name" value="SERINE HYDROXYMETHYLTRANSFERASE 1"/>
    <property type="match status" value="1"/>
</dbReference>
<dbReference type="Pfam" id="PF00464">
    <property type="entry name" value="SHMT"/>
    <property type="match status" value="1"/>
</dbReference>
<dbReference type="PIRSF" id="PIRSF000412">
    <property type="entry name" value="SHMT"/>
    <property type="match status" value="1"/>
</dbReference>
<dbReference type="SUPFAM" id="SSF53383">
    <property type="entry name" value="PLP-dependent transferases"/>
    <property type="match status" value="1"/>
</dbReference>
<dbReference type="PROSITE" id="PS00096">
    <property type="entry name" value="SHMT"/>
    <property type="match status" value="1"/>
</dbReference>
<feature type="chain" id="PRO_0000234989" description="Probable serine hydroxymethyltransferase">
    <location>
        <begin position="1"/>
        <end position="418"/>
    </location>
</feature>
<feature type="binding site" evidence="1">
    <location>
        <position position="118"/>
    </location>
    <ligand>
        <name>(6S)-5,6,7,8-tetrahydrofolate</name>
        <dbReference type="ChEBI" id="CHEBI:57453"/>
    </ligand>
</feature>
<feature type="binding site" evidence="1">
    <location>
        <begin position="122"/>
        <end position="124"/>
    </location>
    <ligand>
        <name>(6S)-5,6,7,8-tetrahydrofolate</name>
        <dbReference type="ChEBI" id="CHEBI:57453"/>
    </ligand>
</feature>
<feature type="binding site" evidence="1">
    <location>
        <begin position="351"/>
        <end position="353"/>
    </location>
    <ligand>
        <name>(6S)-5,6,7,8-tetrahydrofolate</name>
        <dbReference type="ChEBI" id="CHEBI:57453"/>
    </ligand>
</feature>
<feature type="modified residue" description="N6-(pyridoxal phosphate)lysine" evidence="1">
    <location>
        <position position="226"/>
    </location>
</feature>
<name>GLYA_MESHJ</name>